<reference key="1">
    <citation type="journal article" date="2000" name="Nature">
        <title>Sequence and analysis of chromosome 3 of the plant Arabidopsis thaliana.</title>
        <authorList>
            <person name="Salanoubat M."/>
            <person name="Lemcke K."/>
            <person name="Rieger M."/>
            <person name="Ansorge W."/>
            <person name="Unseld M."/>
            <person name="Fartmann B."/>
            <person name="Valle G."/>
            <person name="Bloecker H."/>
            <person name="Perez-Alonso M."/>
            <person name="Obermaier B."/>
            <person name="Delseny M."/>
            <person name="Boutry M."/>
            <person name="Grivell L.A."/>
            <person name="Mache R."/>
            <person name="Puigdomenech P."/>
            <person name="De Simone V."/>
            <person name="Choisne N."/>
            <person name="Artiguenave F."/>
            <person name="Robert C."/>
            <person name="Brottier P."/>
            <person name="Wincker P."/>
            <person name="Cattolico L."/>
            <person name="Weissenbach J."/>
            <person name="Saurin W."/>
            <person name="Quetier F."/>
            <person name="Schaefer M."/>
            <person name="Mueller-Auer S."/>
            <person name="Gabel C."/>
            <person name="Fuchs M."/>
            <person name="Benes V."/>
            <person name="Wurmbach E."/>
            <person name="Drzonek H."/>
            <person name="Erfle H."/>
            <person name="Jordan N."/>
            <person name="Bangert S."/>
            <person name="Wiedelmann R."/>
            <person name="Kranz H."/>
            <person name="Voss H."/>
            <person name="Holland R."/>
            <person name="Brandt P."/>
            <person name="Nyakatura G."/>
            <person name="Vezzi A."/>
            <person name="D'Angelo M."/>
            <person name="Pallavicini A."/>
            <person name="Toppo S."/>
            <person name="Simionati B."/>
            <person name="Conrad A."/>
            <person name="Hornischer K."/>
            <person name="Kauer G."/>
            <person name="Loehnert T.-H."/>
            <person name="Nordsiek G."/>
            <person name="Reichelt J."/>
            <person name="Scharfe M."/>
            <person name="Schoen O."/>
            <person name="Bargues M."/>
            <person name="Terol J."/>
            <person name="Climent J."/>
            <person name="Navarro P."/>
            <person name="Collado C."/>
            <person name="Perez-Perez A."/>
            <person name="Ottenwaelder B."/>
            <person name="Duchemin D."/>
            <person name="Cooke R."/>
            <person name="Laudie M."/>
            <person name="Berger-Llauro C."/>
            <person name="Purnelle B."/>
            <person name="Masuy D."/>
            <person name="de Haan M."/>
            <person name="Maarse A.C."/>
            <person name="Alcaraz J.-P."/>
            <person name="Cottet A."/>
            <person name="Casacuberta E."/>
            <person name="Monfort A."/>
            <person name="Argiriou A."/>
            <person name="Flores M."/>
            <person name="Liguori R."/>
            <person name="Vitale D."/>
            <person name="Mannhaupt G."/>
            <person name="Haase D."/>
            <person name="Schoof H."/>
            <person name="Rudd S."/>
            <person name="Zaccaria P."/>
            <person name="Mewes H.-W."/>
            <person name="Mayer K.F.X."/>
            <person name="Kaul S."/>
            <person name="Town C.D."/>
            <person name="Koo H.L."/>
            <person name="Tallon L.J."/>
            <person name="Jenkins J."/>
            <person name="Rooney T."/>
            <person name="Rizzo M."/>
            <person name="Walts A."/>
            <person name="Utterback T."/>
            <person name="Fujii C.Y."/>
            <person name="Shea T.P."/>
            <person name="Creasy T.H."/>
            <person name="Haas B."/>
            <person name="Maiti R."/>
            <person name="Wu D."/>
            <person name="Peterson J."/>
            <person name="Van Aken S."/>
            <person name="Pai G."/>
            <person name="Militscher J."/>
            <person name="Sellers P."/>
            <person name="Gill J.E."/>
            <person name="Feldblyum T.V."/>
            <person name="Preuss D."/>
            <person name="Lin X."/>
            <person name="Nierman W.C."/>
            <person name="Salzberg S.L."/>
            <person name="White O."/>
            <person name="Venter J.C."/>
            <person name="Fraser C.M."/>
            <person name="Kaneko T."/>
            <person name="Nakamura Y."/>
            <person name="Sato S."/>
            <person name="Kato T."/>
            <person name="Asamizu E."/>
            <person name="Sasamoto S."/>
            <person name="Kimura T."/>
            <person name="Idesawa K."/>
            <person name="Kawashima K."/>
            <person name="Kishida Y."/>
            <person name="Kiyokawa C."/>
            <person name="Kohara M."/>
            <person name="Matsumoto M."/>
            <person name="Matsuno A."/>
            <person name="Muraki A."/>
            <person name="Nakayama S."/>
            <person name="Nakazaki N."/>
            <person name="Shinpo S."/>
            <person name="Takeuchi C."/>
            <person name="Wada T."/>
            <person name="Watanabe A."/>
            <person name="Yamada M."/>
            <person name="Yasuda M."/>
            <person name="Tabata S."/>
        </authorList>
    </citation>
    <scope>NUCLEOTIDE SEQUENCE [LARGE SCALE GENOMIC DNA]</scope>
    <source>
        <strain>cv. Columbia</strain>
    </source>
</reference>
<reference key="2">
    <citation type="journal article" date="2017" name="Plant J.">
        <title>Araport11: a complete reannotation of the Arabidopsis thaliana reference genome.</title>
        <authorList>
            <person name="Cheng C.Y."/>
            <person name="Krishnakumar V."/>
            <person name="Chan A.P."/>
            <person name="Thibaud-Nissen F."/>
            <person name="Schobel S."/>
            <person name="Town C.D."/>
        </authorList>
    </citation>
    <scope>GENOME REANNOTATION</scope>
    <source>
        <strain>cv. Columbia</strain>
    </source>
</reference>
<reference key="3">
    <citation type="journal article" date="2002" name="J. Biol. Chem.">
        <title>Purple acid phosphatases of Arabidopsis thaliana. Comparative analysis and differential regulation by phosphate deprivation.</title>
        <authorList>
            <person name="Li D."/>
            <person name="Zhu H."/>
            <person name="Liu K."/>
            <person name="Liu X."/>
            <person name="Leggewie G."/>
            <person name="Udvardi M."/>
            <person name="Wang D."/>
        </authorList>
    </citation>
    <scope>GENE FAMILY</scope>
    <scope>NOMENCLATURE</scope>
</reference>
<reference key="4">
    <citation type="journal article" date="2005" name="Plant Mol. Biol.">
        <title>Expression patterns of purple acid phosphatase genes in Arabidopsis organs and functional analysis of AtPAP23 predominantly transcribed in flower.</title>
        <authorList>
            <person name="Zhu H."/>
            <person name="Qian W."/>
            <person name="Lu X."/>
            <person name="Li D."/>
            <person name="Liu X."/>
            <person name="Liu K."/>
            <person name="Wang D."/>
        </authorList>
    </citation>
    <scope>TISSUE SPECIFICITY</scope>
</reference>
<dbReference type="EC" id="3.1.3.2"/>
<dbReference type="EMBL" id="AL355775">
    <property type="protein sequence ID" value="CAB90939.1"/>
    <property type="molecule type" value="Genomic_DNA"/>
</dbReference>
<dbReference type="EMBL" id="CP002686">
    <property type="protein sequence ID" value="AEE78116.1"/>
    <property type="molecule type" value="Genomic_DNA"/>
</dbReference>
<dbReference type="PIR" id="T49253">
    <property type="entry name" value="T49253"/>
</dbReference>
<dbReference type="RefSeq" id="NP_190198.1">
    <property type="nucleotide sequence ID" value="NM_114481.1"/>
</dbReference>
<dbReference type="SMR" id="Q9LX83"/>
<dbReference type="FunCoup" id="Q9LX83">
    <property type="interactions" value="18"/>
</dbReference>
<dbReference type="STRING" id="3702.Q9LX83"/>
<dbReference type="GlyCosmos" id="Q9LX83">
    <property type="glycosylation" value="5 sites, No reported glycans"/>
</dbReference>
<dbReference type="GlyGen" id="Q9LX83">
    <property type="glycosylation" value="5 sites"/>
</dbReference>
<dbReference type="PaxDb" id="3702-AT3G46120.1"/>
<dbReference type="EnsemblPlants" id="AT3G46120.1">
    <property type="protein sequence ID" value="AT3G46120.1"/>
    <property type="gene ID" value="AT3G46120"/>
</dbReference>
<dbReference type="GeneID" id="823755"/>
<dbReference type="Gramene" id="AT3G46120.1">
    <property type="protein sequence ID" value="AT3G46120.1"/>
    <property type="gene ID" value="AT3G46120"/>
</dbReference>
<dbReference type="KEGG" id="ath:AT3G46120"/>
<dbReference type="Araport" id="AT3G46120"/>
<dbReference type="TAIR" id="AT3G46120">
    <property type="gene designation" value="PAP19"/>
</dbReference>
<dbReference type="eggNOG" id="KOG1378">
    <property type="taxonomic scope" value="Eukaryota"/>
</dbReference>
<dbReference type="HOGENOM" id="CLU_013387_0_1_1"/>
<dbReference type="InParanoid" id="Q9LX83"/>
<dbReference type="OMA" id="EGRANEF"/>
<dbReference type="PhylomeDB" id="Q9LX83"/>
<dbReference type="BioCyc" id="ARA:AT3G46120-MONOMER"/>
<dbReference type="PRO" id="PR:Q9LX83"/>
<dbReference type="Proteomes" id="UP000006548">
    <property type="component" value="Chromosome 3"/>
</dbReference>
<dbReference type="ExpressionAtlas" id="Q9LX83">
    <property type="expression patterns" value="baseline and differential"/>
</dbReference>
<dbReference type="GO" id="GO:0005576">
    <property type="term" value="C:extracellular region"/>
    <property type="evidence" value="ECO:0007669"/>
    <property type="project" value="UniProtKB-SubCell"/>
</dbReference>
<dbReference type="GO" id="GO:0003993">
    <property type="term" value="F:acid phosphatase activity"/>
    <property type="evidence" value="ECO:0000250"/>
    <property type="project" value="TAIR"/>
</dbReference>
<dbReference type="GO" id="GO:0046872">
    <property type="term" value="F:metal ion binding"/>
    <property type="evidence" value="ECO:0007669"/>
    <property type="project" value="UniProtKB-KW"/>
</dbReference>
<dbReference type="CDD" id="cd00839">
    <property type="entry name" value="MPP_PAPs"/>
    <property type="match status" value="1"/>
</dbReference>
<dbReference type="FunFam" id="3.60.21.10:FF:000353">
    <property type="entry name" value="Purple acid phosphatase 19"/>
    <property type="match status" value="1"/>
</dbReference>
<dbReference type="Gene3D" id="3.60.21.10">
    <property type="match status" value="1"/>
</dbReference>
<dbReference type="Gene3D" id="2.60.40.380">
    <property type="entry name" value="Purple acid phosphatase-like, N-terminal"/>
    <property type="match status" value="1"/>
</dbReference>
<dbReference type="InterPro" id="IPR004843">
    <property type="entry name" value="Calcineurin-like_PHP_ApaH"/>
</dbReference>
<dbReference type="InterPro" id="IPR029052">
    <property type="entry name" value="Metallo-depent_PP-like"/>
</dbReference>
<dbReference type="InterPro" id="IPR041792">
    <property type="entry name" value="MPP_PAP"/>
</dbReference>
<dbReference type="InterPro" id="IPR039331">
    <property type="entry name" value="PPA-like"/>
</dbReference>
<dbReference type="InterPro" id="IPR008963">
    <property type="entry name" value="Purple_acid_Pase-like_N"/>
</dbReference>
<dbReference type="InterPro" id="IPR015914">
    <property type="entry name" value="Purple_acid_Pase_N"/>
</dbReference>
<dbReference type="InterPro" id="IPR025733">
    <property type="entry name" value="Purple_acid_PPase_C_dom"/>
</dbReference>
<dbReference type="PANTHER" id="PTHR22953">
    <property type="entry name" value="ACID PHOSPHATASE RELATED"/>
    <property type="match status" value="1"/>
</dbReference>
<dbReference type="PANTHER" id="PTHR22953:SF120">
    <property type="entry name" value="PURPLE ACID PHOSPHATASE 11-RELATED"/>
    <property type="match status" value="1"/>
</dbReference>
<dbReference type="Pfam" id="PF00149">
    <property type="entry name" value="Metallophos"/>
    <property type="match status" value="1"/>
</dbReference>
<dbReference type="Pfam" id="PF14008">
    <property type="entry name" value="Metallophos_C"/>
    <property type="match status" value="1"/>
</dbReference>
<dbReference type="Pfam" id="PF16656">
    <property type="entry name" value="Pur_ac_phosph_N"/>
    <property type="match status" value="1"/>
</dbReference>
<dbReference type="SUPFAM" id="SSF56300">
    <property type="entry name" value="Metallo-dependent phosphatases"/>
    <property type="match status" value="1"/>
</dbReference>
<dbReference type="SUPFAM" id="SSF49363">
    <property type="entry name" value="Purple acid phosphatase, N-terminal domain"/>
    <property type="match status" value="1"/>
</dbReference>
<accession>Q9LX83</accession>
<sequence length="388" mass="44053">MGLNHLTLVCSAIALLSIFVVSQAGVTSTHVRVSEPSEEMPLETFPPPACYNAPEQVHITQGDHAGRGMIISWVTPLNEDGSNVVTYWIANSDGSDNKSALATTSSYRYFNYTSGYLYHATIKGLETLYNYMSNPKGQAVLFAGDLSYADDHPNHDQRKWDSYGRFVEPSAAYQPWIWAAGNHEIDYAESIPHKVHLHFGTKSNELQLTSSYSPLTQLMDELKKVNRSETPWLIVLVHAPWYNSNNYHYMEGESMRVTFEPWFVENKVDIVFAGHVHAYERSERISNIQYNITDGMSTPVKDQNAPVYITIGDGGNIEGIANNFIDPQPSYSAFREASFGHAILEIKNRTHAHYTWHRNKEDEFIPEAVIADSIWLKNRYYLREEETS</sequence>
<name>PPA19_ARATH</name>
<comment type="catalytic activity">
    <reaction>
        <text>a phosphate monoester + H2O = an alcohol + phosphate</text>
        <dbReference type="Rhea" id="RHEA:15017"/>
        <dbReference type="ChEBI" id="CHEBI:15377"/>
        <dbReference type="ChEBI" id="CHEBI:30879"/>
        <dbReference type="ChEBI" id="CHEBI:43474"/>
        <dbReference type="ChEBI" id="CHEBI:67140"/>
        <dbReference type="EC" id="3.1.3.2"/>
    </reaction>
</comment>
<comment type="cofactor">
    <cofactor evidence="1">
        <name>Fe cation</name>
        <dbReference type="ChEBI" id="CHEBI:24875"/>
    </cofactor>
    <text evidence="1">Binds 1 Fe cation per subunit.</text>
</comment>
<comment type="cofactor">
    <cofactor evidence="1">
        <name>Zn(2+)</name>
        <dbReference type="ChEBI" id="CHEBI:29105"/>
    </cofactor>
    <text evidence="1">Binds 1 zinc ion per subunit.</text>
</comment>
<comment type="subunit">
    <text evidence="1">Homodimer.</text>
</comment>
<comment type="subcellular location">
    <subcellularLocation>
        <location evidence="1">Secreted</location>
    </subcellularLocation>
</comment>
<comment type="tissue specificity">
    <text evidence="3">Specifically expressed in flowers.</text>
</comment>
<comment type="similarity">
    <text evidence="4">Belongs to the metallophosphoesterase superfamily. Purple acid phosphatase family.</text>
</comment>
<organism>
    <name type="scientific">Arabidopsis thaliana</name>
    <name type="common">Mouse-ear cress</name>
    <dbReference type="NCBI Taxonomy" id="3702"/>
    <lineage>
        <taxon>Eukaryota</taxon>
        <taxon>Viridiplantae</taxon>
        <taxon>Streptophyta</taxon>
        <taxon>Embryophyta</taxon>
        <taxon>Tracheophyta</taxon>
        <taxon>Spermatophyta</taxon>
        <taxon>Magnoliopsida</taxon>
        <taxon>eudicotyledons</taxon>
        <taxon>Gunneridae</taxon>
        <taxon>Pentapetalae</taxon>
        <taxon>rosids</taxon>
        <taxon>malvids</taxon>
        <taxon>Brassicales</taxon>
        <taxon>Brassicaceae</taxon>
        <taxon>Camelineae</taxon>
        <taxon>Arabidopsis</taxon>
    </lineage>
</organism>
<evidence type="ECO:0000250" key="1"/>
<evidence type="ECO:0000255" key="2"/>
<evidence type="ECO:0000269" key="3">
    <source>
    </source>
</evidence>
<evidence type="ECO:0000305" key="4"/>
<protein>
    <recommendedName>
        <fullName>Purple acid phosphatase 19</fullName>
        <ecNumber>3.1.3.2</ecNumber>
    </recommendedName>
</protein>
<keyword id="KW-0325">Glycoprotein</keyword>
<keyword id="KW-0378">Hydrolase</keyword>
<keyword id="KW-0408">Iron</keyword>
<keyword id="KW-0479">Metal-binding</keyword>
<keyword id="KW-1185">Reference proteome</keyword>
<keyword id="KW-0964">Secreted</keyword>
<keyword id="KW-0732">Signal</keyword>
<keyword id="KW-0862">Zinc</keyword>
<gene>
    <name type="primary">PAP19</name>
    <name type="ordered locus">At3g46120</name>
    <name type="ORF">F12M12.90</name>
</gene>
<proteinExistence type="evidence at transcript level"/>
<feature type="signal peptide" evidence="2">
    <location>
        <begin position="1"/>
        <end position="24"/>
    </location>
</feature>
<feature type="chain" id="PRO_0000372822" description="Purple acid phosphatase 19">
    <location>
        <begin position="25"/>
        <end position="388"/>
    </location>
</feature>
<feature type="active site" description="Proton donor" evidence="1">
    <location>
        <position position="248"/>
    </location>
</feature>
<feature type="binding site" evidence="1">
    <location>
        <position position="145"/>
    </location>
    <ligand>
        <name>Fe cation</name>
        <dbReference type="ChEBI" id="CHEBI:24875"/>
    </ligand>
</feature>
<feature type="binding site" evidence="1">
    <location>
        <position position="145"/>
    </location>
    <ligand>
        <name>Zn(2+)</name>
        <dbReference type="ChEBI" id="CHEBI:29105"/>
    </ligand>
</feature>
<feature type="binding site" evidence="1">
    <location>
        <position position="148"/>
    </location>
    <ligand>
        <name>Fe cation</name>
        <dbReference type="ChEBI" id="CHEBI:24875"/>
    </ligand>
</feature>
<feature type="binding site" evidence="1">
    <location>
        <position position="182"/>
    </location>
    <ligand>
        <name>substrate</name>
    </ligand>
</feature>
<feature type="binding site" evidence="1">
    <location>
        <position position="182"/>
    </location>
    <ligand>
        <name>Zn(2+)</name>
        <dbReference type="ChEBI" id="CHEBI:29105"/>
    </ligand>
</feature>
<feature type="binding site" evidence="1">
    <location>
        <position position="238"/>
    </location>
    <ligand>
        <name>Zn(2+)</name>
        <dbReference type="ChEBI" id="CHEBI:29105"/>
    </ligand>
</feature>
<feature type="binding site" evidence="1">
    <location>
        <begin position="275"/>
        <end position="277"/>
    </location>
    <ligand>
        <name>substrate</name>
    </ligand>
</feature>
<feature type="binding site" evidence="1">
    <location>
        <position position="275"/>
    </location>
    <ligand>
        <name>Zn(2+)</name>
        <dbReference type="ChEBI" id="CHEBI:29105"/>
    </ligand>
</feature>
<feature type="binding site" evidence="1">
    <location>
        <position position="277"/>
    </location>
    <ligand>
        <name>Fe cation</name>
        <dbReference type="ChEBI" id="CHEBI:24875"/>
    </ligand>
</feature>
<feature type="glycosylation site" description="N-linked (GlcNAc...) asparagine" evidence="2">
    <location>
        <position position="97"/>
    </location>
</feature>
<feature type="glycosylation site" description="N-linked (GlcNAc...) asparagine" evidence="2">
    <location>
        <position position="111"/>
    </location>
</feature>
<feature type="glycosylation site" description="N-linked (GlcNAc...) asparagine" evidence="2">
    <location>
        <position position="226"/>
    </location>
</feature>
<feature type="glycosylation site" description="N-linked (GlcNAc...) asparagine" evidence="2">
    <location>
        <position position="291"/>
    </location>
</feature>
<feature type="glycosylation site" description="N-linked (GlcNAc...) asparagine" evidence="2">
    <location>
        <position position="348"/>
    </location>
</feature>